<accession>P35018</accession>
<sequence length="85" mass="10115">SFQETRRVLTKAAFENHIDWLKGLKENVIIGRLIPAGTGFKQFYLYEYTKKNCEENIISLDPYNFEDNIIYKILTNQLEQNKRLN</sequence>
<evidence type="ECO:0000250" key="1"/>
<evidence type="ECO:0000305" key="2"/>
<dbReference type="EC" id="2.7.7.6"/>
<dbReference type="EMBL" id="X67814">
    <property type="protein sequence ID" value="CAA48017.1"/>
    <property type="molecule type" value="Genomic_DNA"/>
</dbReference>
<dbReference type="SMR" id="P35018"/>
<dbReference type="GO" id="GO:0009507">
    <property type="term" value="C:chloroplast"/>
    <property type="evidence" value="ECO:0007669"/>
    <property type="project" value="UniProtKB-SubCell"/>
</dbReference>
<dbReference type="GO" id="GO:0000428">
    <property type="term" value="C:DNA-directed RNA polymerase complex"/>
    <property type="evidence" value="ECO:0007669"/>
    <property type="project" value="UniProtKB-KW"/>
</dbReference>
<dbReference type="GO" id="GO:0005739">
    <property type="term" value="C:mitochondrion"/>
    <property type="evidence" value="ECO:0007669"/>
    <property type="project" value="GOC"/>
</dbReference>
<dbReference type="GO" id="GO:0003899">
    <property type="term" value="F:DNA-directed RNA polymerase activity"/>
    <property type="evidence" value="ECO:0007669"/>
    <property type="project" value="UniProtKB-EC"/>
</dbReference>
<dbReference type="Gene3D" id="1.10.150.390">
    <property type="match status" value="1"/>
</dbReference>
<dbReference type="PANTHER" id="PTHR48443">
    <property type="entry name" value="DNA-DIRECTED RNA POLYMERASE SUBUNIT BETA"/>
    <property type="match status" value="1"/>
</dbReference>
<dbReference type="PANTHER" id="PTHR48443:SF2">
    <property type="entry name" value="DNA-DIRECTED RNA POLYMERASE SUBUNIT BETA"/>
    <property type="match status" value="1"/>
</dbReference>
<dbReference type="SUPFAM" id="SSF64484">
    <property type="entry name" value="beta and beta-prime subunits of DNA dependent RNA-polymerase"/>
    <property type="match status" value="1"/>
</dbReference>
<keyword id="KW-0150">Chloroplast</keyword>
<keyword id="KW-0240">DNA-directed RNA polymerase</keyword>
<keyword id="KW-0548">Nucleotidyltransferase</keyword>
<keyword id="KW-0934">Plastid</keyword>
<keyword id="KW-0804">Transcription</keyword>
<keyword id="KW-0808">Transferase</keyword>
<gene>
    <name type="primary">rpoC2</name>
</gene>
<reference key="1">
    <citation type="journal article" date="1993" name="Plant Mol. Biol.">
        <title>Organization of plastid-encoded ATPase genes and flanking regions including homologues of infB and tsf in the thermophilic red alga Galdieria sulphuraria.</title>
        <authorList>
            <person name="Kostrzewa M."/>
            <person name="Zetsche K."/>
        </authorList>
    </citation>
    <scope>NUCLEOTIDE SEQUENCE [GENOMIC DNA]</scope>
    <source>
        <strain>14-1-1 / Isolate 107.79/Goettingen</strain>
    </source>
</reference>
<feature type="chain" id="PRO_0000067924" description="DNA-directed RNA polymerase subunit beta''">
    <location>
        <begin position="1" status="less than"/>
        <end position="85"/>
    </location>
</feature>
<feature type="non-terminal residue">
    <location>
        <position position="1"/>
    </location>
</feature>
<protein>
    <recommendedName>
        <fullName>DNA-directed RNA polymerase subunit beta''</fullName>
        <ecNumber>2.7.7.6</ecNumber>
    </recommendedName>
    <alternativeName>
        <fullName>PEP</fullName>
    </alternativeName>
    <alternativeName>
        <fullName>Plastid-encoded RNA polymerase subunit beta''</fullName>
        <shortName>RNA polymerase subunit beta''</shortName>
    </alternativeName>
</protein>
<name>RPOC2_GALSU</name>
<proteinExistence type="inferred from homology"/>
<comment type="function">
    <text evidence="1">DNA-dependent RNA polymerase catalyzes the transcription of DNA into RNA using the four ribonucleoside triphosphates as substrates.</text>
</comment>
<comment type="catalytic activity">
    <reaction>
        <text>RNA(n) + a ribonucleoside 5'-triphosphate = RNA(n+1) + diphosphate</text>
        <dbReference type="Rhea" id="RHEA:21248"/>
        <dbReference type="Rhea" id="RHEA-COMP:14527"/>
        <dbReference type="Rhea" id="RHEA-COMP:17342"/>
        <dbReference type="ChEBI" id="CHEBI:33019"/>
        <dbReference type="ChEBI" id="CHEBI:61557"/>
        <dbReference type="ChEBI" id="CHEBI:140395"/>
        <dbReference type="EC" id="2.7.7.6"/>
    </reaction>
</comment>
<comment type="subunit">
    <text evidence="1">In plastids the minimal PEP RNA polymerase catalytic core is composed of four subunits: alpha, beta, beta', and beta''. When a (nuclear-encoded) sigma factor is associated with the core the holoenzyme is formed, which can initiate transcription (By similarity).</text>
</comment>
<comment type="subcellular location">
    <subcellularLocation>
        <location>Plastid</location>
        <location>Chloroplast</location>
    </subcellularLocation>
</comment>
<comment type="similarity">
    <text evidence="2">Belongs to the RNA polymerase beta' chain family. RpoC2 subfamily.</text>
</comment>
<geneLocation type="chloroplast"/>
<organism>
    <name type="scientific">Galdieria sulphuraria</name>
    <name type="common">Red alga</name>
    <dbReference type="NCBI Taxonomy" id="130081"/>
    <lineage>
        <taxon>Eukaryota</taxon>
        <taxon>Rhodophyta</taxon>
        <taxon>Bangiophyceae</taxon>
        <taxon>Galdieriales</taxon>
        <taxon>Galdieriaceae</taxon>
        <taxon>Galdieria</taxon>
    </lineage>
</organism>